<organism>
    <name type="scientific">Mus musculus</name>
    <name type="common">Mouse</name>
    <dbReference type="NCBI Taxonomy" id="10090"/>
    <lineage>
        <taxon>Eukaryota</taxon>
        <taxon>Metazoa</taxon>
        <taxon>Chordata</taxon>
        <taxon>Craniata</taxon>
        <taxon>Vertebrata</taxon>
        <taxon>Euteleostomi</taxon>
        <taxon>Mammalia</taxon>
        <taxon>Eutheria</taxon>
        <taxon>Euarchontoglires</taxon>
        <taxon>Glires</taxon>
        <taxon>Rodentia</taxon>
        <taxon>Myomorpha</taxon>
        <taxon>Muroidea</taxon>
        <taxon>Muridae</taxon>
        <taxon>Murinae</taxon>
        <taxon>Mus</taxon>
        <taxon>Mus</taxon>
    </lineage>
</organism>
<feature type="chain" id="PRO_0000328837" description="Ankyrin repeat domain-containing protein 24">
    <location>
        <begin position="1"/>
        <end position="985"/>
    </location>
</feature>
<feature type="repeat" description="ANK 1">
    <location>
        <begin position="52"/>
        <end position="81"/>
    </location>
</feature>
<feature type="repeat" description="ANK 2">
    <location>
        <begin position="85"/>
        <end position="114"/>
    </location>
</feature>
<feature type="repeat" description="ANK 3">
    <location>
        <begin position="118"/>
        <end position="147"/>
    </location>
</feature>
<feature type="repeat" description="ANK 4">
    <location>
        <begin position="151"/>
        <end position="180"/>
    </location>
</feature>
<feature type="repeat" description="ANK 5">
    <location>
        <begin position="184"/>
        <end position="213"/>
    </location>
</feature>
<feature type="region of interest" description="Disordered" evidence="2">
    <location>
        <begin position="243"/>
        <end position="293"/>
    </location>
</feature>
<feature type="region of interest" description="Disordered" evidence="2">
    <location>
        <begin position="311"/>
        <end position="360"/>
    </location>
</feature>
<feature type="region of interest" description="Disordered" evidence="2">
    <location>
        <begin position="386"/>
        <end position="412"/>
    </location>
</feature>
<feature type="region of interest" description="Disordered" evidence="2">
    <location>
        <begin position="476"/>
        <end position="503"/>
    </location>
</feature>
<feature type="region of interest" description="Disordered" evidence="2">
    <location>
        <begin position="594"/>
        <end position="614"/>
    </location>
</feature>
<feature type="coiled-coil region" evidence="1">
    <location>
        <begin position="291"/>
        <end position="488"/>
    </location>
</feature>
<feature type="compositionally biased region" description="Basic and acidic residues" evidence="2">
    <location>
        <begin position="311"/>
        <end position="326"/>
    </location>
</feature>
<feature type="compositionally biased region" description="Basic and acidic residues" evidence="2">
    <location>
        <begin position="349"/>
        <end position="360"/>
    </location>
</feature>
<feature type="sequence conflict" description="In Ref. 2; AAH48236." evidence="5" ref="2">
    <original>E</original>
    <variation>G</variation>
    <location>
        <position position="391"/>
    </location>
</feature>
<proteinExistence type="evidence at protein level"/>
<protein>
    <recommendedName>
        <fullName>Ankyrin repeat domain-containing protein 24</fullName>
    </recommendedName>
</protein>
<keyword id="KW-0040">ANK repeat</keyword>
<keyword id="KW-1003">Cell membrane</keyword>
<keyword id="KW-0966">Cell projection</keyword>
<keyword id="KW-0175">Coiled coil</keyword>
<keyword id="KW-0472">Membrane</keyword>
<keyword id="KW-1185">Reference proteome</keyword>
<keyword id="KW-0677">Repeat</keyword>
<reference key="1">
    <citation type="journal article" date="2009" name="PLoS Biol.">
        <title>Lineage-specific biology revealed by a finished genome assembly of the mouse.</title>
        <authorList>
            <person name="Church D.M."/>
            <person name="Goodstadt L."/>
            <person name="Hillier L.W."/>
            <person name="Zody M.C."/>
            <person name="Goldstein S."/>
            <person name="She X."/>
            <person name="Bult C.J."/>
            <person name="Agarwala R."/>
            <person name="Cherry J.L."/>
            <person name="DiCuccio M."/>
            <person name="Hlavina W."/>
            <person name="Kapustin Y."/>
            <person name="Meric P."/>
            <person name="Maglott D."/>
            <person name="Birtle Z."/>
            <person name="Marques A.C."/>
            <person name="Graves T."/>
            <person name="Zhou S."/>
            <person name="Teague B."/>
            <person name="Potamousis K."/>
            <person name="Churas C."/>
            <person name="Place M."/>
            <person name="Herschleb J."/>
            <person name="Runnheim R."/>
            <person name="Forrest D."/>
            <person name="Amos-Landgraf J."/>
            <person name="Schwartz D.C."/>
            <person name="Cheng Z."/>
            <person name="Lindblad-Toh K."/>
            <person name="Eichler E.E."/>
            <person name="Ponting C.P."/>
        </authorList>
    </citation>
    <scope>NUCLEOTIDE SEQUENCE [LARGE SCALE GENOMIC DNA]</scope>
    <source>
        <strain>C57BL/6J</strain>
    </source>
</reference>
<reference key="2">
    <citation type="journal article" date="2004" name="Genome Res.">
        <title>The status, quality, and expansion of the NIH full-length cDNA project: the Mammalian Gene Collection (MGC).</title>
        <authorList>
            <consortium name="The MGC Project Team"/>
        </authorList>
    </citation>
    <scope>NUCLEOTIDE SEQUENCE [LARGE SCALE MRNA]</scope>
    <source>
        <tissue>Olfactory epithelium</tissue>
    </source>
</reference>
<reference key="3">
    <citation type="journal article" date="2015" name="Sci. Data">
        <title>The proteome of mouse vestibular hair bundles over development.</title>
        <authorList>
            <person name="Krey J.F."/>
            <person name="Sherman N.E."/>
            <person name="Jeffery E.D."/>
            <person name="Choi D."/>
            <person name="Barr-Gillespie P.G."/>
        </authorList>
    </citation>
    <scope>IDENTIFICATION BY MASS SPECTROMETRY</scope>
    <scope>TISSUE SPECIFICITY</scope>
</reference>
<reference key="4">
    <citation type="journal article" date="2022" name="J. Cell Biol.">
        <title>ANKRD24 organizes TRIOBP to reinforce stereocilia insertion points.</title>
        <authorList>
            <person name="Krey J.F."/>
            <person name="Liu C."/>
            <person name="Belyantseva I.A."/>
            <person name="Bateschell M."/>
            <person name="Dumont R.A."/>
            <person name="Goldsmith J."/>
            <person name="Chatterjee P."/>
            <person name="Morrill R.S."/>
            <person name="Fedorov L.M."/>
            <person name="Foster S."/>
            <person name="Kim J."/>
            <person name="Nuttall A.L."/>
            <person name="Jones S.M."/>
            <person name="Choi D."/>
            <person name="Friedman T.B."/>
            <person name="Ricci A.J."/>
            <person name="Zhao B."/>
            <person name="Barr-Gillespie P.G."/>
        </authorList>
    </citation>
    <scope>DISRUPTION PHENOTYPE</scope>
    <scope>FUNCTION</scope>
    <scope>SUBCELLULAR LOCATION</scope>
    <scope>SUBUNIT</scope>
    <scope>INTERACTION WITH TRIOBP (ISOFORM 4)</scope>
    <scope>DEVELOPMENTAL STAGE</scope>
</reference>
<name>ANR24_MOUSE</name>
<evidence type="ECO:0000255" key="1"/>
<evidence type="ECO:0000256" key="2">
    <source>
        <dbReference type="SAM" id="MobiDB-lite"/>
    </source>
</evidence>
<evidence type="ECO:0000269" key="3">
    <source>
    </source>
</evidence>
<evidence type="ECO:0000269" key="4">
    <source>
    </source>
</evidence>
<evidence type="ECO:0000305" key="5"/>
<sequence length="985" mass="106238">MKTLRARFKKTEGQDWGKSDQRLLQAVENNDVARVASLIAHKGLVPTKLDPEGKSAFHLAAMRGAAGCLEVMLAQGADVMSTDGAGYNALHLAAKYGHPECLKQLLEASCVVDIEDSSGWTALHHAAAGGCLSCSKLLCSFKAHMNPRDRSGATPLIIAAQMCHTDLCRLLLQQGAATNDQDLQGRTALMLACEGGSPETVEVLLQGGAQLSITDALGQDATHYGALTGDKLILQLLHESARRSSPPSASLEEDSGEASSQNSVSSHEKQGAPKKRKAPQPPASTPVPDDRDAYEEIVRLRQERGRLLQKIRGLEQHKERRRKEPLEAEASSVHSLERQVQELQQMLAEKQEEKESLGREVESLQSRLSLLENERENTSYDVATLQDEEGEMPDFPGADALMPKNQSPSAEEIVASLQEQVAQLTRQNQELLEKVQILEEFEKDEAQMAEESQAEVVPLVLYESLRAELEQLRRQYTEAMHSQQQQQEGEPPRAQEGEETAYQEIKDKGITIQNGPSVPDLNGTTYAETKANGMELQAGGSKGVWNTEAGVSEAAPIEPEAAGSEATGKDRLAAKEMDTSATMAEALNVKALGDNAESEPVAAEDTGGKENPGMKADEVDVLAQAGLTGTVIRNMEAIGVRDTGIQATGLEAKAVKTTGVQATVAEVIGVKVTGVQTTAIEAIGVKDTTQVATGAQADCWQATEADCTGAQDTAMEPTGAQATVTETTEAETSGTEDPCAAILHPGAAAAALQAELETRIRGLEEALRRREREAAAELEAARGRFAEAEEAARGRSRELEALRELLATATATGERARTEAAELRQALAASEARVAELSSTVDAAREELERMRGASVPADEHEHALSALRDHVTRLQAQLADLARRHEKTSAEVFQITDLSKEVFTLKEALKVQQSTPASSKEEEALRGQVTALQQQIQEEAREHGAVVALYRTHLLYAIQGQMDEDVQCILSQILQMQRLQAQGR</sequence>
<dbReference type="EMBL" id="AC153919">
    <property type="status" value="NOT_ANNOTATED_CDS"/>
    <property type="molecule type" value="Genomic_DNA"/>
</dbReference>
<dbReference type="EMBL" id="BC048236">
    <property type="protein sequence ID" value="AAH48236.3"/>
    <property type="molecule type" value="mRNA"/>
</dbReference>
<dbReference type="CCDS" id="CCDS36001.1"/>
<dbReference type="RefSeq" id="NP_081756.4">
    <property type="nucleotide sequence ID" value="NM_027480.3"/>
</dbReference>
<dbReference type="RefSeq" id="XP_006514161.1">
    <property type="nucleotide sequence ID" value="XM_006514098.5"/>
</dbReference>
<dbReference type="SMR" id="Q80VM7"/>
<dbReference type="BioGRID" id="214167">
    <property type="interactions" value="1"/>
</dbReference>
<dbReference type="FunCoup" id="Q80VM7">
    <property type="interactions" value="7"/>
</dbReference>
<dbReference type="STRING" id="10090.ENSMUSP00000112932"/>
<dbReference type="PhosphoSitePlus" id="Q80VM7"/>
<dbReference type="jPOST" id="Q80VM7"/>
<dbReference type="PaxDb" id="10090-ENSMUSP00000112932"/>
<dbReference type="ProteomicsDB" id="281998"/>
<dbReference type="Antibodypedia" id="53380">
    <property type="antibodies" value="16 antibodies from 10 providers"/>
</dbReference>
<dbReference type="DNASU" id="70615"/>
<dbReference type="Ensembl" id="ENSMUST00000119336.8">
    <property type="protein sequence ID" value="ENSMUSP00000112932.2"/>
    <property type="gene ID" value="ENSMUSG00000054708.18"/>
</dbReference>
<dbReference type="GeneID" id="70615"/>
<dbReference type="KEGG" id="mmu:70615"/>
<dbReference type="UCSC" id="uc007gjd.1">
    <property type="organism name" value="mouse"/>
</dbReference>
<dbReference type="AGR" id="MGI:1890394"/>
<dbReference type="CTD" id="170961"/>
<dbReference type="MGI" id="MGI:1890394">
    <property type="gene designation" value="Ankrd24"/>
</dbReference>
<dbReference type="VEuPathDB" id="HostDB:ENSMUSG00000054708"/>
<dbReference type="eggNOG" id="ENOG502QQ0K">
    <property type="taxonomic scope" value="Eukaryota"/>
</dbReference>
<dbReference type="GeneTree" id="ENSGT00940000159237"/>
<dbReference type="HOGENOM" id="CLU_005323_0_0_1"/>
<dbReference type="InParanoid" id="Q80VM7"/>
<dbReference type="OMA" id="GEASSQX"/>
<dbReference type="OrthoDB" id="341259at2759"/>
<dbReference type="PhylomeDB" id="Q80VM7"/>
<dbReference type="TreeFam" id="TF331274"/>
<dbReference type="BioGRID-ORCS" id="70615">
    <property type="hits" value="3 hits in 80 CRISPR screens"/>
</dbReference>
<dbReference type="ChiTaRS" id="Ankrd24">
    <property type="organism name" value="mouse"/>
</dbReference>
<dbReference type="PRO" id="PR:Q80VM7"/>
<dbReference type="Proteomes" id="UP000000589">
    <property type="component" value="Chromosome 10"/>
</dbReference>
<dbReference type="RNAct" id="Q80VM7">
    <property type="molecule type" value="protein"/>
</dbReference>
<dbReference type="Bgee" id="ENSMUSG00000054708">
    <property type="expression patterns" value="Expressed in motor neuron and 242 other cell types or tissues"/>
</dbReference>
<dbReference type="ExpressionAtlas" id="Q80VM7">
    <property type="expression patterns" value="baseline and differential"/>
</dbReference>
<dbReference type="GO" id="GO:0005886">
    <property type="term" value="C:plasma membrane"/>
    <property type="evidence" value="ECO:0000314"/>
    <property type="project" value="UniProtKB"/>
</dbReference>
<dbReference type="GO" id="GO:0032420">
    <property type="term" value="C:stereocilium"/>
    <property type="evidence" value="ECO:0000314"/>
    <property type="project" value="UniProtKB"/>
</dbReference>
<dbReference type="GO" id="GO:0003779">
    <property type="term" value="F:actin binding"/>
    <property type="evidence" value="ECO:0007669"/>
    <property type="project" value="InterPro"/>
</dbReference>
<dbReference type="GO" id="GO:0060088">
    <property type="term" value="P:auditory receptor cell stereocilium organization"/>
    <property type="evidence" value="ECO:0000315"/>
    <property type="project" value="UniProtKB"/>
</dbReference>
<dbReference type="GO" id="GO:0007605">
    <property type="term" value="P:sensory perception of sound"/>
    <property type="evidence" value="ECO:0000315"/>
    <property type="project" value="UniProtKB"/>
</dbReference>
<dbReference type="Gene3D" id="1.25.40.20">
    <property type="entry name" value="Ankyrin repeat-containing domain"/>
    <property type="match status" value="2"/>
</dbReference>
<dbReference type="InterPro" id="IPR002110">
    <property type="entry name" value="Ankyrin_rpt"/>
</dbReference>
<dbReference type="InterPro" id="IPR036770">
    <property type="entry name" value="Ankyrin_rpt-contain_sf"/>
</dbReference>
<dbReference type="InterPro" id="IPR042420">
    <property type="entry name" value="RAI14/UACA"/>
</dbReference>
<dbReference type="PANTHER" id="PTHR24129">
    <property type="entry name" value="ANKYCORBIN"/>
    <property type="match status" value="1"/>
</dbReference>
<dbReference type="PANTHER" id="PTHR24129:SF2">
    <property type="entry name" value="DUF3447 DOMAIN-CONTAINING PROTEIN"/>
    <property type="match status" value="1"/>
</dbReference>
<dbReference type="Pfam" id="PF00023">
    <property type="entry name" value="Ank"/>
    <property type="match status" value="2"/>
</dbReference>
<dbReference type="Pfam" id="PF12796">
    <property type="entry name" value="Ank_2"/>
    <property type="match status" value="1"/>
</dbReference>
<dbReference type="Pfam" id="PF13606">
    <property type="entry name" value="Ank_3"/>
    <property type="match status" value="1"/>
</dbReference>
<dbReference type="SMART" id="SM00248">
    <property type="entry name" value="ANK"/>
    <property type="match status" value="5"/>
</dbReference>
<dbReference type="SUPFAM" id="SSF48403">
    <property type="entry name" value="Ankyrin repeat"/>
    <property type="match status" value="1"/>
</dbReference>
<dbReference type="PROSITE" id="PS50297">
    <property type="entry name" value="ANK_REP_REGION"/>
    <property type="match status" value="1"/>
</dbReference>
<dbReference type="PROSITE" id="PS50088">
    <property type="entry name" value="ANK_REPEAT"/>
    <property type="match status" value="5"/>
</dbReference>
<accession>Q80VM7</accession>
<accession>E9QJV7</accession>
<gene>
    <name type="primary">Ankrd24</name>
</gene>
<comment type="function">
    <text evidence="4">Component of the stereocilia rootlet in hair cells of inner ear. Bridges the apical plasma membrane with the lower rootlet and maintains normal distribution of TRIOBP, thereby reinforcing stereocilia insertion points and organizing rootlets for hearing with long-term resilience.</text>
</comment>
<comment type="subunit">
    <text evidence="4">Homodimer (PubMed:35175278). Interacts (via C-terminal domain) with TRIOBP (via C-terminal domain) isoform 4; recruits TRIOBP isoform 4 to stereocilia rootlets (PubMed:35175278).</text>
</comment>
<comment type="subcellular location">
    <subcellularLocation>
        <location evidence="4">Cell membrane</location>
    </subcellularLocation>
    <subcellularLocation>
        <location evidence="4">Cell projection</location>
        <location evidence="4">Stereocilium</location>
    </subcellularLocation>
    <text evidence="4">Localizes to hair cell stereocilia rootlets. Concentrated to the stereocilia insertion point, forming a ring at the junction between the lower and upper rootlets.</text>
</comment>
<comment type="tissue specificity">
    <text evidence="3">Expressed in vestibular hair bundles.</text>
</comment>
<comment type="developmental stage">
    <text evidence="4">Prominently associated with the stereocilia rootlet in outer hair cells (OHCs), inner hair cells (IHCs), and vestibular (utricle) hair cells (VHCs) on postnatal day 7.5. On postnatal day 1.5, is initially present in outer hair cells (OHCs) and inner hair cells (IHCs) as well as at the rootlets. At postnatal day 19.5 is concentrated at stereocilia insertion points.</text>
</comment>
<comment type="disruption phenotype">
    <text evidence="4">Deficient mice exhibit progressive hearing loss. Loss of Ankrd24 induces morphological changes in hair bundles, early postnatal hair bundles are warped. Stereocilia of deficient mice show diminished recovery of auditory function after noise damage and increased susceptibility to overstimulation of the hair bund.</text>
</comment>